<organism>
    <name type="scientific">Neurospora crassa (strain ATCC 24698 / 74-OR23-1A / CBS 708.71 / DSM 1257 / FGSC 987)</name>
    <dbReference type="NCBI Taxonomy" id="367110"/>
    <lineage>
        <taxon>Eukaryota</taxon>
        <taxon>Fungi</taxon>
        <taxon>Dikarya</taxon>
        <taxon>Ascomycota</taxon>
        <taxon>Pezizomycotina</taxon>
        <taxon>Sordariomycetes</taxon>
        <taxon>Sordariomycetidae</taxon>
        <taxon>Sordariales</taxon>
        <taxon>Sordariaceae</taxon>
        <taxon>Neurospora</taxon>
    </lineage>
</organism>
<protein>
    <recommendedName>
        <fullName>Uncharacterized protein B24G3.190</fullName>
    </recommendedName>
</protein>
<name>YBG3_NEUCR</name>
<dbReference type="EMBL" id="AL670002">
    <property type="protein sequence ID" value="CAD21234.1"/>
    <property type="molecule type" value="Genomic_DNA"/>
</dbReference>
<dbReference type="EMBL" id="CM002237">
    <property type="protein sequence ID" value="ESA43668.1"/>
    <property type="molecule type" value="Genomic_DNA"/>
</dbReference>
<dbReference type="RefSeq" id="XP_011393460.1">
    <property type="nucleotide sequence ID" value="XM_011395158.1"/>
</dbReference>
<dbReference type="SMR" id="Q8WZY3"/>
<dbReference type="FunCoup" id="Q8WZY3">
    <property type="interactions" value="17"/>
</dbReference>
<dbReference type="PaxDb" id="5141-EFNCRP00000001693"/>
<dbReference type="EnsemblFungi" id="ESA43668">
    <property type="protein sequence ID" value="ESA43668"/>
    <property type="gene ID" value="NCU01548"/>
</dbReference>
<dbReference type="GeneID" id="3872389"/>
<dbReference type="KEGG" id="ncr:NCU01548"/>
<dbReference type="VEuPathDB" id="FungiDB:NCU01548"/>
<dbReference type="HOGENOM" id="CLU_156026_0_0_1"/>
<dbReference type="InParanoid" id="Q8WZY3"/>
<dbReference type="OrthoDB" id="3888684at2759"/>
<dbReference type="Proteomes" id="UP000001805">
    <property type="component" value="Chromosome 6, Linkage Group II"/>
</dbReference>
<dbReference type="GO" id="GO:0004866">
    <property type="term" value="F:endopeptidase inhibitor activity"/>
    <property type="evidence" value="ECO:0000318"/>
    <property type="project" value="GO_Central"/>
</dbReference>
<dbReference type="GO" id="GO:0042144">
    <property type="term" value="P:vacuole fusion, non-autophagic"/>
    <property type="evidence" value="ECO:0000318"/>
    <property type="project" value="GO_Central"/>
</dbReference>
<dbReference type="FunFam" id="3.30.70.80:FF:000005">
    <property type="entry name" value="Proteinase inhibitor I2B"/>
    <property type="match status" value="1"/>
</dbReference>
<dbReference type="Gene3D" id="3.30.70.80">
    <property type="entry name" value="Peptidase S8 propeptide/proteinase inhibitor I9"/>
    <property type="match status" value="1"/>
</dbReference>
<dbReference type="InterPro" id="IPR052471">
    <property type="entry name" value="PBI_I9"/>
</dbReference>
<dbReference type="InterPro" id="IPR037045">
    <property type="entry name" value="S8pro/Inhibitor_I9_sf"/>
</dbReference>
<dbReference type="PANTHER" id="PTHR28288:SF1">
    <property type="entry name" value="INHIBITOR I9 DOMAIN-CONTAINING PROTEIN"/>
    <property type="match status" value="1"/>
</dbReference>
<dbReference type="PANTHER" id="PTHR28288">
    <property type="entry name" value="PROTEASE B INHIBITOR 2"/>
    <property type="match status" value="1"/>
</dbReference>
<dbReference type="SUPFAM" id="SSF54897">
    <property type="entry name" value="Protease propeptides/inhibitors"/>
    <property type="match status" value="1"/>
</dbReference>
<feature type="signal peptide" evidence="1">
    <location>
        <begin position="1"/>
        <end position="19"/>
    </location>
</feature>
<feature type="chain" id="PRO_0000026707" description="Uncharacterized protein B24G3.190">
    <location>
        <begin position="20"/>
        <end position="94"/>
    </location>
</feature>
<gene>
    <name type="ORF">B24G3.190</name>
    <name type="ORF">NCU01548</name>
</gene>
<accession>Q8WZY3</accession>
<accession>Q7RWY8</accession>
<accession>V5INE1</accession>
<comment type="similarity">
    <text evidence="2">Belongs to the protease inhibitor I9 family.</text>
</comment>
<keyword id="KW-1185">Reference proteome</keyword>
<keyword id="KW-0732">Signal</keyword>
<reference key="1">
    <citation type="journal article" date="2003" name="Nucleic Acids Res.">
        <title>What's in the genome of a filamentous fungus? Analysis of the Neurospora genome sequence.</title>
        <authorList>
            <person name="Mannhaupt G."/>
            <person name="Montrone C."/>
            <person name="Haase D."/>
            <person name="Mewes H.-W."/>
            <person name="Aign V."/>
            <person name="Hoheisel J.D."/>
            <person name="Fartmann B."/>
            <person name="Nyakatura G."/>
            <person name="Kempken F."/>
            <person name="Maier J."/>
            <person name="Schulte U."/>
        </authorList>
    </citation>
    <scope>NUCLEOTIDE SEQUENCE [LARGE SCALE GENOMIC DNA]</scope>
    <source>
        <strain>ATCC 24698 / 74-OR23-1A / CBS 708.71 / DSM 1257 / FGSC 987</strain>
    </source>
</reference>
<reference key="2">
    <citation type="journal article" date="2003" name="Nature">
        <title>The genome sequence of the filamentous fungus Neurospora crassa.</title>
        <authorList>
            <person name="Galagan J.E."/>
            <person name="Calvo S.E."/>
            <person name="Borkovich K.A."/>
            <person name="Selker E.U."/>
            <person name="Read N.D."/>
            <person name="Jaffe D.B."/>
            <person name="FitzHugh W."/>
            <person name="Ma L.-J."/>
            <person name="Smirnov S."/>
            <person name="Purcell S."/>
            <person name="Rehman B."/>
            <person name="Elkins T."/>
            <person name="Engels R."/>
            <person name="Wang S."/>
            <person name="Nielsen C.B."/>
            <person name="Butler J."/>
            <person name="Endrizzi M."/>
            <person name="Qui D."/>
            <person name="Ianakiev P."/>
            <person name="Bell-Pedersen D."/>
            <person name="Nelson M.A."/>
            <person name="Werner-Washburne M."/>
            <person name="Selitrennikoff C.P."/>
            <person name="Kinsey J.A."/>
            <person name="Braun E.L."/>
            <person name="Zelter A."/>
            <person name="Schulte U."/>
            <person name="Kothe G.O."/>
            <person name="Jedd G."/>
            <person name="Mewes H.-W."/>
            <person name="Staben C."/>
            <person name="Marcotte E."/>
            <person name="Greenberg D."/>
            <person name="Roy A."/>
            <person name="Foley K."/>
            <person name="Naylor J."/>
            <person name="Stange-Thomann N."/>
            <person name="Barrett R."/>
            <person name="Gnerre S."/>
            <person name="Kamal M."/>
            <person name="Kamvysselis M."/>
            <person name="Mauceli E.W."/>
            <person name="Bielke C."/>
            <person name="Rudd S."/>
            <person name="Frishman D."/>
            <person name="Krystofova S."/>
            <person name="Rasmussen C."/>
            <person name="Metzenberg R.L."/>
            <person name="Perkins D.D."/>
            <person name="Kroken S."/>
            <person name="Cogoni C."/>
            <person name="Macino G."/>
            <person name="Catcheside D.E.A."/>
            <person name="Li W."/>
            <person name="Pratt R.J."/>
            <person name="Osmani S.A."/>
            <person name="DeSouza C.P.C."/>
            <person name="Glass N.L."/>
            <person name="Orbach M.J."/>
            <person name="Berglund J.A."/>
            <person name="Voelker R."/>
            <person name="Yarden O."/>
            <person name="Plamann M."/>
            <person name="Seiler S."/>
            <person name="Dunlap J.C."/>
            <person name="Radford A."/>
            <person name="Aramayo R."/>
            <person name="Natvig D.O."/>
            <person name="Alex L.A."/>
            <person name="Mannhaupt G."/>
            <person name="Ebbole D.J."/>
            <person name="Freitag M."/>
            <person name="Paulsen I."/>
            <person name="Sachs M.S."/>
            <person name="Lander E.S."/>
            <person name="Nusbaum C."/>
            <person name="Birren B.W."/>
        </authorList>
    </citation>
    <scope>NUCLEOTIDE SEQUENCE [LARGE SCALE GENOMIC DNA]</scope>
    <source>
        <strain>ATCC 24698 / 74-OR23-1A / CBS 708.71 / DSM 1257 / FGSC 987</strain>
    </source>
</reference>
<proteinExistence type="inferred from homology"/>
<sequence>MKFSGLILGALALVSGAIAVDIQKSVIITYKENTPDSVIQQDKKAILDDGGVITHEYTLMKGFSAKVNAKTLESVSASSESYATIEEDKVVSTL</sequence>
<evidence type="ECO:0000255" key="1"/>
<evidence type="ECO:0000305" key="2"/>